<proteinExistence type="inferred from homology"/>
<dbReference type="EC" id="6.1.1.5" evidence="1"/>
<dbReference type="EMBL" id="CP000127">
    <property type="protein sequence ID" value="ABA58735.1"/>
    <property type="molecule type" value="Genomic_DNA"/>
</dbReference>
<dbReference type="RefSeq" id="WP_002809903.1">
    <property type="nucleotide sequence ID" value="NC_007484.1"/>
</dbReference>
<dbReference type="SMR" id="Q3J8W1"/>
<dbReference type="FunCoup" id="Q3J8W1">
    <property type="interactions" value="529"/>
</dbReference>
<dbReference type="STRING" id="323261.Noc_2277"/>
<dbReference type="KEGG" id="noc:Noc_2277"/>
<dbReference type="eggNOG" id="COG0060">
    <property type="taxonomic scope" value="Bacteria"/>
</dbReference>
<dbReference type="HOGENOM" id="CLU_001493_7_0_6"/>
<dbReference type="InParanoid" id="Q3J8W1"/>
<dbReference type="Proteomes" id="UP000006838">
    <property type="component" value="Chromosome"/>
</dbReference>
<dbReference type="GO" id="GO:0005829">
    <property type="term" value="C:cytosol"/>
    <property type="evidence" value="ECO:0007669"/>
    <property type="project" value="TreeGrafter"/>
</dbReference>
<dbReference type="GO" id="GO:0002161">
    <property type="term" value="F:aminoacyl-tRNA deacylase activity"/>
    <property type="evidence" value="ECO:0007669"/>
    <property type="project" value="InterPro"/>
</dbReference>
<dbReference type="GO" id="GO:0005524">
    <property type="term" value="F:ATP binding"/>
    <property type="evidence" value="ECO:0007669"/>
    <property type="project" value="UniProtKB-UniRule"/>
</dbReference>
<dbReference type="GO" id="GO:0004822">
    <property type="term" value="F:isoleucine-tRNA ligase activity"/>
    <property type="evidence" value="ECO:0007669"/>
    <property type="project" value="UniProtKB-UniRule"/>
</dbReference>
<dbReference type="GO" id="GO:0000049">
    <property type="term" value="F:tRNA binding"/>
    <property type="evidence" value="ECO:0007669"/>
    <property type="project" value="InterPro"/>
</dbReference>
<dbReference type="GO" id="GO:0008270">
    <property type="term" value="F:zinc ion binding"/>
    <property type="evidence" value="ECO:0007669"/>
    <property type="project" value="UniProtKB-UniRule"/>
</dbReference>
<dbReference type="GO" id="GO:0006428">
    <property type="term" value="P:isoleucyl-tRNA aminoacylation"/>
    <property type="evidence" value="ECO:0007669"/>
    <property type="project" value="UniProtKB-UniRule"/>
</dbReference>
<dbReference type="CDD" id="cd07960">
    <property type="entry name" value="Anticodon_Ia_Ile_BEm"/>
    <property type="match status" value="1"/>
</dbReference>
<dbReference type="CDD" id="cd00818">
    <property type="entry name" value="IleRS_core"/>
    <property type="match status" value="1"/>
</dbReference>
<dbReference type="FunFam" id="1.10.730.20:FF:000001">
    <property type="entry name" value="Isoleucine--tRNA ligase"/>
    <property type="match status" value="1"/>
</dbReference>
<dbReference type="FunFam" id="3.40.50.620:FF:000042">
    <property type="entry name" value="Isoleucine--tRNA ligase"/>
    <property type="match status" value="1"/>
</dbReference>
<dbReference type="FunFam" id="3.40.50.620:FF:000048">
    <property type="entry name" value="Isoleucine--tRNA ligase"/>
    <property type="match status" value="1"/>
</dbReference>
<dbReference type="Gene3D" id="1.10.730.20">
    <property type="match status" value="1"/>
</dbReference>
<dbReference type="Gene3D" id="3.40.50.620">
    <property type="entry name" value="HUPs"/>
    <property type="match status" value="2"/>
</dbReference>
<dbReference type="Gene3D" id="3.90.740.10">
    <property type="entry name" value="Valyl/Leucyl/Isoleucyl-tRNA synthetase, editing domain"/>
    <property type="match status" value="1"/>
</dbReference>
<dbReference type="HAMAP" id="MF_02002">
    <property type="entry name" value="Ile_tRNA_synth_type1"/>
    <property type="match status" value="1"/>
</dbReference>
<dbReference type="InterPro" id="IPR001412">
    <property type="entry name" value="aa-tRNA-synth_I_CS"/>
</dbReference>
<dbReference type="InterPro" id="IPR002300">
    <property type="entry name" value="aa-tRNA-synth_Ia"/>
</dbReference>
<dbReference type="InterPro" id="IPR033708">
    <property type="entry name" value="Anticodon_Ile_BEm"/>
</dbReference>
<dbReference type="InterPro" id="IPR002301">
    <property type="entry name" value="Ile-tRNA-ligase"/>
</dbReference>
<dbReference type="InterPro" id="IPR023585">
    <property type="entry name" value="Ile-tRNA-ligase_type1"/>
</dbReference>
<dbReference type="InterPro" id="IPR050081">
    <property type="entry name" value="Ile-tRNA_ligase"/>
</dbReference>
<dbReference type="InterPro" id="IPR013155">
    <property type="entry name" value="M/V/L/I-tRNA-synth_anticd-bd"/>
</dbReference>
<dbReference type="InterPro" id="IPR014729">
    <property type="entry name" value="Rossmann-like_a/b/a_fold"/>
</dbReference>
<dbReference type="InterPro" id="IPR009080">
    <property type="entry name" value="tRNAsynth_Ia_anticodon-bd"/>
</dbReference>
<dbReference type="InterPro" id="IPR009008">
    <property type="entry name" value="Val/Leu/Ile-tRNA-synth_edit"/>
</dbReference>
<dbReference type="InterPro" id="IPR010663">
    <property type="entry name" value="Znf_FPG/IleRS"/>
</dbReference>
<dbReference type="NCBIfam" id="TIGR00392">
    <property type="entry name" value="ileS"/>
    <property type="match status" value="1"/>
</dbReference>
<dbReference type="PANTHER" id="PTHR42765:SF1">
    <property type="entry name" value="ISOLEUCINE--TRNA LIGASE, MITOCHONDRIAL"/>
    <property type="match status" value="1"/>
</dbReference>
<dbReference type="PANTHER" id="PTHR42765">
    <property type="entry name" value="SOLEUCYL-TRNA SYNTHETASE"/>
    <property type="match status" value="1"/>
</dbReference>
<dbReference type="Pfam" id="PF08264">
    <property type="entry name" value="Anticodon_1"/>
    <property type="match status" value="1"/>
</dbReference>
<dbReference type="Pfam" id="PF00133">
    <property type="entry name" value="tRNA-synt_1"/>
    <property type="match status" value="1"/>
</dbReference>
<dbReference type="Pfam" id="PF06827">
    <property type="entry name" value="zf-FPG_IleRS"/>
    <property type="match status" value="1"/>
</dbReference>
<dbReference type="PRINTS" id="PR00984">
    <property type="entry name" value="TRNASYNTHILE"/>
</dbReference>
<dbReference type="SUPFAM" id="SSF47323">
    <property type="entry name" value="Anticodon-binding domain of a subclass of class I aminoacyl-tRNA synthetases"/>
    <property type="match status" value="1"/>
</dbReference>
<dbReference type="SUPFAM" id="SSF52374">
    <property type="entry name" value="Nucleotidylyl transferase"/>
    <property type="match status" value="1"/>
</dbReference>
<dbReference type="SUPFAM" id="SSF50677">
    <property type="entry name" value="ValRS/IleRS/LeuRS editing domain"/>
    <property type="match status" value="1"/>
</dbReference>
<dbReference type="PROSITE" id="PS00178">
    <property type="entry name" value="AA_TRNA_LIGASE_I"/>
    <property type="match status" value="1"/>
</dbReference>
<protein>
    <recommendedName>
        <fullName evidence="1">Isoleucine--tRNA ligase</fullName>
        <ecNumber evidence="1">6.1.1.5</ecNumber>
    </recommendedName>
    <alternativeName>
        <fullName evidence="1">Isoleucyl-tRNA synthetase</fullName>
        <shortName evidence="1">IleRS</shortName>
    </alternativeName>
</protein>
<keyword id="KW-0030">Aminoacyl-tRNA synthetase</keyword>
<keyword id="KW-0067">ATP-binding</keyword>
<keyword id="KW-0963">Cytoplasm</keyword>
<keyword id="KW-0436">Ligase</keyword>
<keyword id="KW-0479">Metal-binding</keyword>
<keyword id="KW-0547">Nucleotide-binding</keyword>
<keyword id="KW-0648">Protein biosynthesis</keyword>
<keyword id="KW-1185">Reference proteome</keyword>
<keyword id="KW-0862">Zinc</keyword>
<sequence>MAKYKETLNLPKTAFPMKANLAQREPQALKRWQAMDLYGKLRNAARGRPRFILHDGPPYANGAIHIGHAVNKILKDIIVKSKSLSGFDAPYVPGWDCHGLPIELNVEKKVGKPGRKIDVASFRRACRDYARKQVNAQREDFERLGVLGDWCHPYLTMDYQFEADVIRTLGKIIEKGHLHKGVKPVHWCVDCGSALAEAEVEYQEKTSPAIDVRFPVVEEVELLARCKAEIPGAGPMSVVIWTTTPWTLPANQAVALHPALKYVLVECSAGQGRERLLLAEGLYREVLARYSAESAVILATCQGDELEGLKLQHPFYERTVPIILGEHVNLEAGTGAVHTAPGHGQDDYVVGNRYQLSIDNPVGGNGCFLPETPLFAGEPVFKANDHIIQVLKERGNLLREQSLQHSYPHCWRHKTPIIFRATPQWFINMEREGLRTAALAEIKKTRWLPGWGQQRIEGMVENRPDWCISRQRAWGTPIPLFVHCQTGELHPDTPRLMEEVARRVEEKGIEAWFELEPKELLGNQAPAYEKVGDTLDVWFDSGVTHTCVLETREELGVPADLYLEGSDQHRGWFQSSLLTSVAIRGTAPYRMVLTHGFTVDAKGKKMSKSQGNVVAPQQVMGSLGADILRLWVAATDYRGEMNVSDEILKRIADSYRRMRNTARYLLANLNGFDPTIHGVPAKDMLALDRWALDRASLLQGEIVQAYEDYNFHLIYQRVHNFCAVDMGAIYLDIIKDRQYTTQADSRARRSAQTAMYHIAEALVRWLAPVLSFTADEIWQYLPGERGESVFLTTWYEDLPSLGEEAPWGRAFWDVILAAREAIAKVLEGVRVEGRIGSSLDAEVDLYVEESLYQALRKLGDELRFVLITSYARVYPAQKRPVEALETEMPGLWTVVIPSHYPKCVRCWHHREEVGSHEDHPELCSRCVENTEGGGEQRAFA</sequence>
<organism>
    <name type="scientific">Nitrosococcus oceani (strain ATCC 19707 / BCRC 17464 / JCM 30415 / NCIMB 11848 / C-107)</name>
    <dbReference type="NCBI Taxonomy" id="323261"/>
    <lineage>
        <taxon>Bacteria</taxon>
        <taxon>Pseudomonadati</taxon>
        <taxon>Pseudomonadota</taxon>
        <taxon>Gammaproteobacteria</taxon>
        <taxon>Chromatiales</taxon>
        <taxon>Chromatiaceae</taxon>
        <taxon>Nitrosococcus</taxon>
    </lineage>
</organism>
<accession>Q3J8W1</accession>
<name>SYI_NITOC</name>
<gene>
    <name evidence="1" type="primary">ileS</name>
    <name type="ordered locus">Noc_2277</name>
</gene>
<reference key="1">
    <citation type="journal article" date="2006" name="Appl. Environ. Microbiol.">
        <title>Complete genome sequence of the marine, chemolithoautotrophic, ammonia-oxidizing bacterium Nitrosococcus oceani ATCC 19707.</title>
        <authorList>
            <person name="Klotz M.G."/>
            <person name="Arp D.J."/>
            <person name="Chain P.S.G."/>
            <person name="El-Sheikh A.F."/>
            <person name="Hauser L.J."/>
            <person name="Hommes N.G."/>
            <person name="Larimer F.W."/>
            <person name="Malfatti S.A."/>
            <person name="Norton J.M."/>
            <person name="Poret-Peterson A.T."/>
            <person name="Vergez L.M."/>
            <person name="Ward B.B."/>
        </authorList>
    </citation>
    <scope>NUCLEOTIDE SEQUENCE [LARGE SCALE GENOMIC DNA]</scope>
    <source>
        <strain>ATCC 19707 / BCRC 17464 / JCM 30415 / NCIMB 11848 / C-107</strain>
    </source>
</reference>
<comment type="function">
    <text evidence="1">Catalyzes the attachment of isoleucine to tRNA(Ile). As IleRS can inadvertently accommodate and process structurally similar amino acids such as valine, to avoid such errors it has two additional distinct tRNA(Ile)-dependent editing activities. One activity is designated as 'pretransfer' editing and involves the hydrolysis of activated Val-AMP. The other activity is designated 'posttransfer' editing and involves deacylation of mischarged Val-tRNA(Ile).</text>
</comment>
<comment type="catalytic activity">
    <reaction evidence="1">
        <text>tRNA(Ile) + L-isoleucine + ATP = L-isoleucyl-tRNA(Ile) + AMP + diphosphate</text>
        <dbReference type="Rhea" id="RHEA:11060"/>
        <dbReference type="Rhea" id="RHEA-COMP:9666"/>
        <dbReference type="Rhea" id="RHEA-COMP:9695"/>
        <dbReference type="ChEBI" id="CHEBI:30616"/>
        <dbReference type="ChEBI" id="CHEBI:33019"/>
        <dbReference type="ChEBI" id="CHEBI:58045"/>
        <dbReference type="ChEBI" id="CHEBI:78442"/>
        <dbReference type="ChEBI" id="CHEBI:78528"/>
        <dbReference type="ChEBI" id="CHEBI:456215"/>
        <dbReference type="EC" id="6.1.1.5"/>
    </reaction>
</comment>
<comment type="cofactor">
    <cofactor evidence="1">
        <name>Zn(2+)</name>
        <dbReference type="ChEBI" id="CHEBI:29105"/>
    </cofactor>
    <text evidence="1">Binds 1 zinc ion per subunit.</text>
</comment>
<comment type="subunit">
    <text evidence="1">Monomer.</text>
</comment>
<comment type="subcellular location">
    <subcellularLocation>
        <location evidence="1">Cytoplasm</location>
    </subcellularLocation>
</comment>
<comment type="domain">
    <text evidence="1">IleRS has two distinct active sites: one for aminoacylation and one for editing. The misactivated valine is translocated from the active site to the editing site, which sterically excludes the correctly activated isoleucine. The single editing site contains two valyl binding pockets, one specific for each substrate (Val-AMP or Val-tRNA(Ile)).</text>
</comment>
<comment type="similarity">
    <text evidence="1">Belongs to the class-I aminoacyl-tRNA synthetase family. IleS type 1 subfamily.</text>
</comment>
<evidence type="ECO:0000255" key="1">
    <source>
        <dbReference type="HAMAP-Rule" id="MF_02002"/>
    </source>
</evidence>
<feature type="chain" id="PRO_1000022094" description="Isoleucine--tRNA ligase">
    <location>
        <begin position="1"/>
        <end position="940"/>
    </location>
</feature>
<feature type="short sequence motif" description="'HIGH' region">
    <location>
        <begin position="58"/>
        <end position="68"/>
    </location>
</feature>
<feature type="short sequence motif" description="'KMSKS' region">
    <location>
        <begin position="605"/>
        <end position="609"/>
    </location>
</feature>
<feature type="binding site" evidence="1">
    <location>
        <position position="564"/>
    </location>
    <ligand>
        <name>L-isoleucyl-5'-AMP</name>
        <dbReference type="ChEBI" id="CHEBI:178002"/>
    </ligand>
</feature>
<feature type="binding site" evidence="1">
    <location>
        <position position="608"/>
    </location>
    <ligand>
        <name>ATP</name>
        <dbReference type="ChEBI" id="CHEBI:30616"/>
    </ligand>
</feature>
<feature type="binding site" evidence="1">
    <location>
        <position position="903"/>
    </location>
    <ligand>
        <name>Zn(2+)</name>
        <dbReference type="ChEBI" id="CHEBI:29105"/>
    </ligand>
</feature>
<feature type="binding site" evidence="1">
    <location>
        <position position="906"/>
    </location>
    <ligand>
        <name>Zn(2+)</name>
        <dbReference type="ChEBI" id="CHEBI:29105"/>
    </ligand>
</feature>
<feature type="binding site" evidence="1">
    <location>
        <position position="923"/>
    </location>
    <ligand>
        <name>Zn(2+)</name>
        <dbReference type="ChEBI" id="CHEBI:29105"/>
    </ligand>
</feature>
<feature type="binding site" evidence="1">
    <location>
        <position position="926"/>
    </location>
    <ligand>
        <name>Zn(2+)</name>
        <dbReference type="ChEBI" id="CHEBI:29105"/>
    </ligand>
</feature>